<gene>
    <name evidence="1" type="primary">astE</name>
    <name type="ordered locus">VCM66_1197</name>
</gene>
<accession>C3LLT8</accession>
<proteinExistence type="inferred from homology"/>
<organism>
    <name type="scientific">Vibrio cholerae serotype O1 (strain M66-2)</name>
    <dbReference type="NCBI Taxonomy" id="579112"/>
    <lineage>
        <taxon>Bacteria</taxon>
        <taxon>Pseudomonadati</taxon>
        <taxon>Pseudomonadota</taxon>
        <taxon>Gammaproteobacteria</taxon>
        <taxon>Vibrionales</taxon>
        <taxon>Vibrionaceae</taxon>
        <taxon>Vibrio</taxon>
    </lineage>
</organism>
<feature type="chain" id="PRO_1000148443" description="Succinylglutamate desuccinylase">
    <location>
        <begin position="1"/>
        <end position="342"/>
    </location>
</feature>
<feature type="active site" evidence="1">
    <location>
        <position position="219"/>
    </location>
</feature>
<feature type="binding site" evidence="1">
    <location>
        <position position="63"/>
    </location>
    <ligand>
        <name>Zn(2+)</name>
        <dbReference type="ChEBI" id="CHEBI:29105"/>
    </ligand>
</feature>
<feature type="binding site" evidence="1">
    <location>
        <position position="66"/>
    </location>
    <ligand>
        <name>Zn(2+)</name>
        <dbReference type="ChEBI" id="CHEBI:29105"/>
    </ligand>
</feature>
<feature type="binding site" evidence="1">
    <location>
        <position position="155"/>
    </location>
    <ligand>
        <name>Zn(2+)</name>
        <dbReference type="ChEBI" id="CHEBI:29105"/>
    </ligand>
</feature>
<keyword id="KW-0056">Arginine metabolism</keyword>
<keyword id="KW-0378">Hydrolase</keyword>
<keyword id="KW-0479">Metal-binding</keyword>
<keyword id="KW-0862">Zinc</keyword>
<evidence type="ECO:0000255" key="1">
    <source>
        <dbReference type="HAMAP-Rule" id="MF_00767"/>
    </source>
</evidence>
<dbReference type="EC" id="3.5.1.96" evidence="1"/>
<dbReference type="EMBL" id="CP001233">
    <property type="protein sequence ID" value="ACP05514.1"/>
    <property type="molecule type" value="Genomic_DNA"/>
</dbReference>
<dbReference type="RefSeq" id="WP_000167426.1">
    <property type="nucleotide sequence ID" value="NC_012578.1"/>
</dbReference>
<dbReference type="SMR" id="C3LLT8"/>
<dbReference type="KEGG" id="vcm:VCM66_1197"/>
<dbReference type="HOGENOM" id="CLU_071608_0_0_6"/>
<dbReference type="UniPathway" id="UPA00185">
    <property type="reaction ID" value="UER00283"/>
</dbReference>
<dbReference type="Proteomes" id="UP000001217">
    <property type="component" value="Chromosome I"/>
</dbReference>
<dbReference type="GO" id="GO:0016788">
    <property type="term" value="F:hydrolase activity, acting on ester bonds"/>
    <property type="evidence" value="ECO:0007669"/>
    <property type="project" value="UniProtKB-UniRule"/>
</dbReference>
<dbReference type="GO" id="GO:0009017">
    <property type="term" value="F:succinylglutamate desuccinylase activity"/>
    <property type="evidence" value="ECO:0007669"/>
    <property type="project" value="UniProtKB-EC"/>
</dbReference>
<dbReference type="GO" id="GO:0008270">
    <property type="term" value="F:zinc ion binding"/>
    <property type="evidence" value="ECO:0007669"/>
    <property type="project" value="UniProtKB-UniRule"/>
</dbReference>
<dbReference type="GO" id="GO:0019544">
    <property type="term" value="P:arginine catabolic process to glutamate"/>
    <property type="evidence" value="ECO:0007669"/>
    <property type="project" value="UniProtKB-UniRule"/>
</dbReference>
<dbReference type="GO" id="GO:0019545">
    <property type="term" value="P:arginine catabolic process to succinate"/>
    <property type="evidence" value="ECO:0007669"/>
    <property type="project" value="UniProtKB-UniRule"/>
</dbReference>
<dbReference type="CDD" id="cd03855">
    <property type="entry name" value="M14_ASTE"/>
    <property type="match status" value="1"/>
</dbReference>
<dbReference type="FunFam" id="3.40.630.10:FF:000144">
    <property type="entry name" value="Succinylglutamate desuccinylase"/>
    <property type="match status" value="1"/>
</dbReference>
<dbReference type="Gene3D" id="3.40.630.10">
    <property type="entry name" value="Zn peptidases"/>
    <property type="match status" value="1"/>
</dbReference>
<dbReference type="HAMAP" id="MF_00767">
    <property type="entry name" value="Arg_catab_AstE"/>
    <property type="match status" value="1"/>
</dbReference>
<dbReference type="InterPro" id="IPR050178">
    <property type="entry name" value="AspA/AstE_fam"/>
</dbReference>
<dbReference type="InterPro" id="IPR055438">
    <property type="entry name" value="AstE_AspA_cat"/>
</dbReference>
<dbReference type="InterPro" id="IPR007036">
    <property type="entry name" value="Aste_AspA_hybrid_dom"/>
</dbReference>
<dbReference type="InterPro" id="IPR016681">
    <property type="entry name" value="SuccinylGlu_desuccinylase"/>
</dbReference>
<dbReference type="NCBIfam" id="NF003706">
    <property type="entry name" value="PRK05324.1"/>
    <property type="match status" value="1"/>
</dbReference>
<dbReference type="PANTHER" id="PTHR15162">
    <property type="entry name" value="ASPARTOACYLASE"/>
    <property type="match status" value="1"/>
</dbReference>
<dbReference type="PANTHER" id="PTHR15162:SF7">
    <property type="entry name" value="SUCCINYLGLUTAMATE DESUCCINYLASE"/>
    <property type="match status" value="1"/>
</dbReference>
<dbReference type="Pfam" id="PF24827">
    <property type="entry name" value="AstE_AspA_cat"/>
    <property type="match status" value="1"/>
</dbReference>
<dbReference type="Pfam" id="PF04952">
    <property type="entry name" value="AstE_AspA_hybrid"/>
    <property type="match status" value="1"/>
</dbReference>
<dbReference type="PIRSF" id="PIRSF017020">
    <property type="entry name" value="AstE"/>
    <property type="match status" value="1"/>
</dbReference>
<dbReference type="SUPFAM" id="SSF53187">
    <property type="entry name" value="Zn-dependent exopeptidases"/>
    <property type="match status" value="1"/>
</dbReference>
<comment type="function">
    <text evidence="1">Transforms N(2)-succinylglutamate into succinate and glutamate.</text>
</comment>
<comment type="catalytic activity">
    <reaction evidence="1">
        <text>N-succinyl-L-glutamate + H2O = L-glutamate + succinate</text>
        <dbReference type="Rhea" id="RHEA:15169"/>
        <dbReference type="ChEBI" id="CHEBI:15377"/>
        <dbReference type="ChEBI" id="CHEBI:29985"/>
        <dbReference type="ChEBI" id="CHEBI:30031"/>
        <dbReference type="ChEBI" id="CHEBI:58763"/>
        <dbReference type="EC" id="3.5.1.96"/>
    </reaction>
</comment>
<comment type="cofactor">
    <cofactor evidence="1">
        <name>Zn(2+)</name>
        <dbReference type="ChEBI" id="CHEBI:29105"/>
    </cofactor>
    <text evidence="1">Binds 1 zinc ion per subunit.</text>
</comment>
<comment type="pathway">
    <text evidence="1">Amino-acid degradation; L-arginine degradation via AST pathway; L-glutamate and succinate from L-arginine: step 5/5.</text>
</comment>
<comment type="similarity">
    <text evidence="1">Belongs to the AspA/AstE family. Succinylglutamate desuccinylase subfamily.</text>
</comment>
<name>ASTE_VIBCM</name>
<protein>
    <recommendedName>
        <fullName evidence="1">Succinylglutamate desuccinylase</fullName>
        <ecNumber evidence="1">3.5.1.96</ecNumber>
    </recommendedName>
</protein>
<reference key="1">
    <citation type="journal article" date="2008" name="PLoS ONE">
        <title>A recalibrated molecular clock and independent origins for the cholera pandemic clones.</title>
        <authorList>
            <person name="Feng L."/>
            <person name="Reeves P.R."/>
            <person name="Lan R."/>
            <person name="Ren Y."/>
            <person name="Gao C."/>
            <person name="Zhou Z."/>
            <person name="Ren Y."/>
            <person name="Cheng J."/>
            <person name="Wang W."/>
            <person name="Wang J."/>
            <person name="Qian W."/>
            <person name="Li D."/>
            <person name="Wang L."/>
        </authorList>
    </citation>
    <scope>NUCLEOTIDE SEQUENCE [LARGE SCALE GENOMIC DNA]</scope>
    <source>
        <strain>M66-2</strain>
    </source>
</reference>
<sequence length="342" mass="39093">MTKSLFRQSFLFDSLDLDHPMVAQTVRTEQGVTLKLHQRGVLEVIPAQTDAATKNMVISCGIHGDETAPMELLDKWIDDIVSGFQPVAERCLFIMAHPQATVRHVRFIEQNLNRLFDDKPHTPSTELAIADNLKVLLRQFFANTDEHSRWHLDLHCAIRGSKHYSFAVSPKARHPVRSRSLMQFIEQAHIEAVMLSNAPSSTFSWYSAEHYAAQALTLELGQVARLGENLLDRLLAFDLAMRDLISRHKPEHLPRKSVMYRVSRTIVRLHDDFDFRFSDDVENFTAFMHGEVFGHDGDKPLMAKNEGEAIVFPNRKVAIGQRAALMVCKVNTRYEDDQLVYD</sequence>